<protein>
    <recommendedName>
        <fullName evidence="3">Leiurutoxin-3</fullName>
    </recommendedName>
    <alternativeName>
        <fullName evidence="2">Leiurutoxin III</fullName>
    </alternativeName>
    <alternativeName>
        <fullName evidence="3">Potassium channel toxin alpha-KTx</fullName>
    </alternativeName>
</protein>
<keyword id="KW-0903">Direct protein sequencing</keyword>
<keyword id="KW-1015">Disulfide bond</keyword>
<keyword id="KW-0872">Ion channel impairing toxin</keyword>
<keyword id="KW-0528">Neurotoxin</keyword>
<keyword id="KW-0632">Potassium channel impairing toxin</keyword>
<keyword id="KW-0964">Secreted</keyword>
<keyword id="KW-0800">Toxin</keyword>
<evidence type="ECO:0000269" key="1">
    <source>
    </source>
</evidence>
<evidence type="ECO:0000303" key="2">
    <source>
    </source>
</evidence>
<evidence type="ECO:0000305" key="3"/>
<evidence type="ECO:0000305" key="4">
    <source>
    </source>
</evidence>
<reference key="1">
    <citation type="journal article" date="1992" name="Biochem. Int.">
        <title>Noxiustoxin and leiurutoxin III, two homologous peptide toxins with binding properties to synaptosomal membrane K+ channels.</title>
        <authorList>
            <person name="Valdivia H.H."/>
            <person name="Martin B.M."/>
            <person name="Escobar L."/>
            <person name="Possani L.D."/>
        </authorList>
    </citation>
    <scope>PROTEIN SEQUENCE</scope>
    <scope>SUBCELLULAR LOCATION</scope>
    <source>
        <tissue>Venom</tissue>
    </source>
</reference>
<proteinExistence type="evidence at protein level"/>
<dbReference type="PIR" id="A48389">
    <property type="entry name" value="A48389"/>
</dbReference>
<dbReference type="GO" id="GO:0005576">
    <property type="term" value="C:extracellular region"/>
    <property type="evidence" value="ECO:0007669"/>
    <property type="project" value="UniProtKB-SubCell"/>
</dbReference>
<dbReference type="GO" id="GO:0015459">
    <property type="term" value="F:potassium channel regulator activity"/>
    <property type="evidence" value="ECO:0007669"/>
    <property type="project" value="UniProtKB-KW"/>
</dbReference>
<dbReference type="GO" id="GO:0090729">
    <property type="term" value="F:toxin activity"/>
    <property type="evidence" value="ECO:0007669"/>
    <property type="project" value="UniProtKB-KW"/>
</dbReference>
<organism>
    <name type="scientific">Leiurus quinquestriatus quinquestriatus</name>
    <name type="common">Egyptian scorpion</name>
    <name type="synonym">Deathstalker scorpion</name>
    <dbReference type="NCBI Taxonomy" id="6885"/>
    <lineage>
        <taxon>Eukaryota</taxon>
        <taxon>Metazoa</taxon>
        <taxon>Ecdysozoa</taxon>
        <taxon>Arthropoda</taxon>
        <taxon>Chelicerata</taxon>
        <taxon>Arachnida</taxon>
        <taxon>Scorpiones</taxon>
        <taxon>Buthida</taxon>
        <taxon>Buthoidea</taxon>
        <taxon>Buthidae</taxon>
        <taxon>Leiurus</taxon>
    </lineage>
</organism>
<accession>P45661</accession>
<sequence length="14" mass="1588">GLIDVRCYDSSQCE</sequence>
<feature type="chain" id="PRO_0000066830" description="Leiurutoxin-3">
    <location>
        <begin position="1"/>
        <end position="14" status="greater than"/>
    </location>
</feature>
<feature type="non-terminal residue">
    <location>
        <position position="14"/>
    </location>
</feature>
<comment type="function">
    <text>Blocker of potassium channels (Kv).</text>
</comment>
<comment type="subcellular location">
    <subcellularLocation>
        <location evidence="1">Secreted</location>
    </subcellularLocation>
</comment>
<comment type="tissue specificity">
    <text evidence="4">Expressed by the venom gland.</text>
</comment>
<comment type="PTM">
    <text evidence="3">Contains 4 disulfide bonds.</text>
</comment>
<comment type="similarity">
    <text evidence="3">Belongs to the short scorpion toxin superfamily. Potassium channel inhibitor family.</text>
</comment>
<name>KAX_LEIQU</name>